<organism>
    <name type="scientific">Rattus norvegicus</name>
    <name type="common">Rat</name>
    <dbReference type="NCBI Taxonomy" id="10116"/>
    <lineage>
        <taxon>Eukaryota</taxon>
        <taxon>Metazoa</taxon>
        <taxon>Chordata</taxon>
        <taxon>Craniata</taxon>
        <taxon>Vertebrata</taxon>
        <taxon>Euteleostomi</taxon>
        <taxon>Mammalia</taxon>
        <taxon>Eutheria</taxon>
        <taxon>Euarchontoglires</taxon>
        <taxon>Glires</taxon>
        <taxon>Rodentia</taxon>
        <taxon>Myomorpha</taxon>
        <taxon>Muroidea</taxon>
        <taxon>Muridae</taxon>
        <taxon>Murinae</taxon>
        <taxon>Rattus</taxon>
    </lineage>
</organism>
<sequence>MVLDLDLFRVDKGGDPALIRETQEKRFKDPGLVDQLVKADSEWRRCRFRADNLNKLKNLCSKTIGEKMKKKEPVGEDESIPEDVLNFDDLTADTLAALKVSQIKKVRLLVDEAIQKCDGERVKLEAERFENLREIGNLLHPSVPISNDEDADNKVERIWGDCTVRKKYSHVDLVVMVDGFEGEKGAVVAGSRGYFLKGVLVFLEQALIQYALRTLGSRGYTPIYTPFFMRKEVMQEVAQLSQFDEELYKVIGKGSEKSDDSSYDEKYLIATSEQPIAALHRDEWLRPEDLPIKYAGFSTCFRQEVGSHGRDTRGIFRVHQFEKIEQFVYSSPHDNKSWEMFDEMITTAEEFYQSLGIPYHIVNIVSGSLNHAASKKLDLEAWFPGSGAFRELVSCSNCTDYQARRLRIRYGQTKKMMDKVEFVHMLNATMCATTRTICAILENYQTEKGIVVPEKLREFMPPGLQELIPFVKPAPIDQEPSKKQKKQHEGSKKKAKEVTLENQLQNMEVTEA</sequence>
<proteinExistence type="evidence at protein level"/>
<keyword id="KW-0007">Acetylation</keyword>
<keyword id="KW-0030">Aminoacyl-tRNA synthetase</keyword>
<keyword id="KW-0067">ATP-binding</keyword>
<keyword id="KW-0963">Cytoplasm</keyword>
<keyword id="KW-0903">Direct protein sequencing</keyword>
<keyword id="KW-0238">DNA-binding</keyword>
<keyword id="KW-0436">Ligase</keyword>
<keyword id="KW-0547">Nucleotide-binding</keyword>
<keyword id="KW-0539">Nucleus</keyword>
<keyword id="KW-0597">Phosphoprotein</keyword>
<keyword id="KW-0648">Protein biosynthesis</keyword>
<keyword id="KW-1185">Reference proteome</keyword>
<gene>
    <name type="primary">Sars1</name>
    <name type="synonym">Sars</name>
</gene>
<accession>Q6P799</accession>
<accession>Q8CIQ8</accession>
<name>SYSC_RAT</name>
<evidence type="ECO:0000250" key="1">
    <source>
        <dbReference type="UniProtKB" id="P49591"/>
    </source>
</evidence>
<evidence type="ECO:0000256" key="2">
    <source>
        <dbReference type="SAM" id="MobiDB-lite"/>
    </source>
</evidence>
<evidence type="ECO:0000305" key="3"/>
<protein>
    <recommendedName>
        <fullName>Serine--tRNA ligase, cytoplasmic</fullName>
        <ecNumber evidence="1">6.1.1.11</ecNumber>
    </recommendedName>
    <alternativeName>
        <fullName>Seryl-tRNA synthetase</fullName>
        <shortName>SerRS</shortName>
    </alternativeName>
    <alternativeName>
        <fullName>Seryl-tRNA(Ser/Sec) synthetase</fullName>
    </alternativeName>
</protein>
<dbReference type="EC" id="6.1.1.11" evidence="1"/>
<dbReference type="EMBL" id="BC061765">
    <property type="protein sequence ID" value="AAH61765.1"/>
    <property type="molecule type" value="mRNA"/>
</dbReference>
<dbReference type="EMBL" id="AY145052">
    <property type="protein sequence ID" value="AAN52758.1"/>
    <property type="molecule type" value="mRNA"/>
</dbReference>
<dbReference type="RefSeq" id="NP_001007607.1">
    <property type="nucleotide sequence ID" value="NM_001007606.1"/>
</dbReference>
<dbReference type="SMR" id="Q6P799"/>
<dbReference type="BioGRID" id="251834">
    <property type="interactions" value="1"/>
</dbReference>
<dbReference type="FunCoup" id="Q6P799">
    <property type="interactions" value="2324"/>
</dbReference>
<dbReference type="IntAct" id="Q6P799">
    <property type="interactions" value="3"/>
</dbReference>
<dbReference type="MINT" id="Q6P799"/>
<dbReference type="STRING" id="10116.ENSRNOP00000071040"/>
<dbReference type="iPTMnet" id="Q6P799"/>
<dbReference type="PhosphoSitePlus" id="Q6P799"/>
<dbReference type="jPOST" id="Q6P799"/>
<dbReference type="PaxDb" id="10116-ENSRNOP00000038448"/>
<dbReference type="Ensembl" id="ENSRNOT00000033015.5">
    <property type="protein sequence ID" value="ENSRNOP00000038448.3"/>
    <property type="gene ID" value="ENSRNOG00000020255.7"/>
</dbReference>
<dbReference type="GeneID" id="266975"/>
<dbReference type="KEGG" id="rno:266975"/>
<dbReference type="UCSC" id="RGD:628813">
    <property type="organism name" value="rat"/>
</dbReference>
<dbReference type="AGR" id="RGD:628813"/>
<dbReference type="CTD" id="6301"/>
<dbReference type="RGD" id="628813">
    <property type="gene designation" value="Sars1"/>
</dbReference>
<dbReference type="eggNOG" id="KOG2509">
    <property type="taxonomic scope" value="Eukaryota"/>
</dbReference>
<dbReference type="GeneTree" id="ENSGT00940000153792"/>
<dbReference type="HOGENOM" id="CLU_023797_0_0_1"/>
<dbReference type="InParanoid" id="Q6P799"/>
<dbReference type="OrthoDB" id="10264585at2759"/>
<dbReference type="PhylomeDB" id="Q6P799"/>
<dbReference type="UniPathway" id="UPA00906">
    <property type="reaction ID" value="UER00895"/>
</dbReference>
<dbReference type="PRO" id="PR:Q6P799"/>
<dbReference type="Proteomes" id="UP000002494">
    <property type="component" value="Chromosome 2"/>
</dbReference>
<dbReference type="Bgee" id="ENSRNOG00000020255">
    <property type="expression patterns" value="Expressed in pancreas and 20 other cell types or tissues"/>
</dbReference>
<dbReference type="ExpressionAtlas" id="Q6P799">
    <property type="expression patterns" value="baseline and differential"/>
</dbReference>
<dbReference type="GO" id="GO:0005737">
    <property type="term" value="C:cytoplasm"/>
    <property type="evidence" value="ECO:0000250"/>
    <property type="project" value="UniProtKB"/>
</dbReference>
<dbReference type="GO" id="GO:0005829">
    <property type="term" value="C:cytosol"/>
    <property type="evidence" value="ECO:0000250"/>
    <property type="project" value="UniProtKB"/>
</dbReference>
<dbReference type="GO" id="GO:0005634">
    <property type="term" value="C:nucleus"/>
    <property type="evidence" value="ECO:0000250"/>
    <property type="project" value="UniProtKB"/>
</dbReference>
<dbReference type="GO" id="GO:0005524">
    <property type="term" value="F:ATP binding"/>
    <property type="evidence" value="ECO:0007669"/>
    <property type="project" value="UniProtKB-KW"/>
</dbReference>
<dbReference type="GO" id="GO:0019899">
    <property type="term" value="F:enzyme binding"/>
    <property type="evidence" value="ECO:0000266"/>
    <property type="project" value="RGD"/>
</dbReference>
<dbReference type="GO" id="GO:0060090">
    <property type="term" value="F:molecular adaptor activity"/>
    <property type="evidence" value="ECO:0000266"/>
    <property type="project" value="RGD"/>
</dbReference>
<dbReference type="GO" id="GO:0042803">
    <property type="term" value="F:protein homodimerization activity"/>
    <property type="evidence" value="ECO:0000266"/>
    <property type="project" value="RGD"/>
</dbReference>
<dbReference type="GO" id="GO:0000978">
    <property type="term" value="F:RNA polymerase II cis-regulatory region sequence-specific DNA binding"/>
    <property type="evidence" value="ECO:0000250"/>
    <property type="project" value="UniProtKB"/>
</dbReference>
<dbReference type="GO" id="GO:0098619">
    <property type="term" value="F:selenocysteine-tRNA ligase activity"/>
    <property type="evidence" value="ECO:0000250"/>
    <property type="project" value="UniProtKB"/>
</dbReference>
<dbReference type="GO" id="GO:0004828">
    <property type="term" value="F:serine-tRNA ligase activity"/>
    <property type="evidence" value="ECO:0000250"/>
    <property type="project" value="UniProtKB"/>
</dbReference>
<dbReference type="GO" id="GO:0000049">
    <property type="term" value="F:tRNA binding"/>
    <property type="evidence" value="ECO:0000318"/>
    <property type="project" value="GO_Central"/>
</dbReference>
<dbReference type="GO" id="GO:0002181">
    <property type="term" value="P:cytoplasmic translation"/>
    <property type="evidence" value="ECO:0000250"/>
    <property type="project" value="UniProtKB"/>
</dbReference>
<dbReference type="GO" id="GO:0016525">
    <property type="term" value="P:negative regulation of angiogenesis"/>
    <property type="evidence" value="ECO:0000250"/>
    <property type="project" value="UniProtKB"/>
</dbReference>
<dbReference type="GO" id="GO:0000122">
    <property type="term" value="P:negative regulation of transcription by RNA polymerase II"/>
    <property type="evidence" value="ECO:0000250"/>
    <property type="project" value="UniProtKB"/>
</dbReference>
<dbReference type="GO" id="GO:1904046">
    <property type="term" value="P:negative regulation of vascular endothelial growth factor production"/>
    <property type="evidence" value="ECO:0000250"/>
    <property type="project" value="UniProtKB"/>
</dbReference>
<dbReference type="GO" id="GO:0001514">
    <property type="term" value="P:selenocysteine incorporation"/>
    <property type="evidence" value="ECO:0000250"/>
    <property type="project" value="UniProtKB"/>
</dbReference>
<dbReference type="GO" id="GO:0006434">
    <property type="term" value="P:seryl-tRNA aminoacylation"/>
    <property type="evidence" value="ECO:0000250"/>
    <property type="project" value="UniProtKB"/>
</dbReference>
<dbReference type="GO" id="GO:0006400">
    <property type="term" value="P:tRNA modification"/>
    <property type="evidence" value="ECO:0000266"/>
    <property type="project" value="RGD"/>
</dbReference>
<dbReference type="CDD" id="cd00770">
    <property type="entry name" value="SerRS_core"/>
    <property type="match status" value="1"/>
</dbReference>
<dbReference type="FunFam" id="1.10.287.40:FF:000002">
    <property type="entry name" value="Serine--tRNA ligase, cytoplasmic"/>
    <property type="match status" value="1"/>
</dbReference>
<dbReference type="FunFam" id="3.30.930.10:FF:000027">
    <property type="entry name" value="Serine--tRNA ligase, cytoplasmic"/>
    <property type="match status" value="1"/>
</dbReference>
<dbReference type="Gene3D" id="3.30.930.10">
    <property type="entry name" value="Bira Bifunctional Protein, Domain 2"/>
    <property type="match status" value="1"/>
</dbReference>
<dbReference type="Gene3D" id="1.10.287.40">
    <property type="entry name" value="Serine-tRNA synthetase, tRNA binding domain"/>
    <property type="match status" value="1"/>
</dbReference>
<dbReference type="InterPro" id="IPR002314">
    <property type="entry name" value="aa-tRNA-synt_IIb"/>
</dbReference>
<dbReference type="InterPro" id="IPR006195">
    <property type="entry name" value="aa-tRNA-synth_II"/>
</dbReference>
<dbReference type="InterPro" id="IPR045864">
    <property type="entry name" value="aa-tRNA-synth_II/BPL/LPL"/>
</dbReference>
<dbReference type="InterPro" id="IPR002317">
    <property type="entry name" value="Ser-tRNA-ligase_type_1"/>
</dbReference>
<dbReference type="InterPro" id="IPR015866">
    <property type="entry name" value="Ser-tRNA-synth_1_N"/>
</dbReference>
<dbReference type="InterPro" id="IPR042103">
    <property type="entry name" value="SerRS_1_N_sf"/>
</dbReference>
<dbReference type="InterPro" id="IPR033729">
    <property type="entry name" value="SerRS_core"/>
</dbReference>
<dbReference type="InterPro" id="IPR010978">
    <property type="entry name" value="tRNA-bd_arm"/>
</dbReference>
<dbReference type="NCBIfam" id="TIGR00414">
    <property type="entry name" value="serS"/>
    <property type="match status" value="1"/>
</dbReference>
<dbReference type="PANTHER" id="PTHR11778">
    <property type="entry name" value="SERYL-TRNA SYNTHETASE"/>
    <property type="match status" value="1"/>
</dbReference>
<dbReference type="Pfam" id="PF02403">
    <property type="entry name" value="Seryl_tRNA_N"/>
    <property type="match status" value="1"/>
</dbReference>
<dbReference type="Pfam" id="PF00587">
    <property type="entry name" value="tRNA-synt_2b"/>
    <property type="match status" value="1"/>
</dbReference>
<dbReference type="PIRSF" id="PIRSF001529">
    <property type="entry name" value="Ser-tRNA-synth_IIa"/>
    <property type="match status" value="1"/>
</dbReference>
<dbReference type="PRINTS" id="PR00981">
    <property type="entry name" value="TRNASYNTHSER"/>
</dbReference>
<dbReference type="SUPFAM" id="SSF55681">
    <property type="entry name" value="Class II aaRS and biotin synthetases"/>
    <property type="match status" value="1"/>
</dbReference>
<dbReference type="SUPFAM" id="SSF46589">
    <property type="entry name" value="tRNA-binding arm"/>
    <property type="match status" value="1"/>
</dbReference>
<dbReference type="PROSITE" id="PS50862">
    <property type="entry name" value="AA_TRNA_LIGASE_II"/>
    <property type="match status" value="1"/>
</dbReference>
<reference key="1">
    <citation type="journal article" date="2004" name="Genome Res.">
        <title>The status, quality, and expansion of the NIH full-length cDNA project: the Mammalian Gene Collection (MGC).</title>
        <authorList>
            <consortium name="The MGC Project Team"/>
        </authorList>
    </citation>
    <scope>NUCLEOTIDE SEQUENCE [LARGE SCALE MRNA]</scope>
    <source>
        <tissue>Prostate</tissue>
    </source>
</reference>
<reference key="2">
    <citation type="submission" date="2006-11" db="UniProtKB">
        <authorList>
            <person name="Lubec G."/>
            <person name="Afjehi-Sadat L."/>
        </authorList>
    </citation>
    <scope>PROTEIN SEQUENCE OF 134-157</scope>
    <scope>IDENTIFICATION BY MASS SPECTROMETRY</scope>
    <source>
        <strain>Sprague-Dawley</strain>
        <tissue>Spinal cord</tissue>
    </source>
</reference>
<reference key="3">
    <citation type="submission" date="2002-08" db="EMBL/GenBank/DDBJ databases">
        <authorList>
            <person name="Heneberg P."/>
            <person name="Draber P."/>
        </authorList>
    </citation>
    <scope>NUCLEOTIDE SEQUENCE [MRNA] OF 173-349</scope>
    <source>
        <strain>Wistar</strain>
    </source>
</reference>
<comment type="function">
    <text evidence="1">Catalyzes the attachment of serine to tRNA(Ser) in a two-step reaction: serine is first activated by ATP to form Ser-AMP and then transferred to the acceptor end of tRNA(Ser). Is probably also able to aminoacylate tRNA(Sec) with serine, to form the misacylated tRNA L-seryl-tRNA(Sec), which will be further converted into selenocysteinyl-tRNA(Sec). In the nucleus, binds to the VEGFA core promoter and prevents MYC binding and transcriptional activation by MYC. Recruits SIRT2 to the VEGFA promoter, promoting deacetylation of histone H4 at 'Lys-16' (H4K16). Thereby, inhibits the production of VEGFA and sprouting angiogenesis mediated by VEGFA.</text>
</comment>
<comment type="catalytic activity">
    <reaction evidence="1">
        <text>tRNA(Ser) + L-serine + ATP = L-seryl-tRNA(Ser) + AMP + diphosphate + H(+)</text>
        <dbReference type="Rhea" id="RHEA:12292"/>
        <dbReference type="Rhea" id="RHEA-COMP:9669"/>
        <dbReference type="Rhea" id="RHEA-COMP:9703"/>
        <dbReference type="ChEBI" id="CHEBI:15378"/>
        <dbReference type="ChEBI" id="CHEBI:30616"/>
        <dbReference type="ChEBI" id="CHEBI:33019"/>
        <dbReference type="ChEBI" id="CHEBI:33384"/>
        <dbReference type="ChEBI" id="CHEBI:78442"/>
        <dbReference type="ChEBI" id="CHEBI:78533"/>
        <dbReference type="ChEBI" id="CHEBI:456215"/>
        <dbReference type="EC" id="6.1.1.11"/>
    </reaction>
</comment>
<comment type="catalytic activity">
    <reaction evidence="1">
        <text>tRNA(Sec) + L-serine + ATP = L-seryl-tRNA(Sec) + AMP + diphosphate + H(+)</text>
        <dbReference type="Rhea" id="RHEA:42580"/>
        <dbReference type="Rhea" id="RHEA-COMP:9742"/>
        <dbReference type="Rhea" id="RHEA-COMP:10128"/>
        <dbReference type="ChEBI" id="CHEBI:15378"/>
        <dbReference type="ChEBI" id="CHEBI:30616"/>
        <dbReference type="ChEBI" id="CHEBI:33019"/>
        <dbReference type="ChEBI" id="CHEBI:33384"/>
        <dbReference type="ChEBI" id="CHEBI:78442"/>
        <dbReference type="ChEBI" id="CHEBI:78533"/>
        <dbReference type="ChEBI" id="CHEBI:456215"/>
        <dbReference type="EC" id="6.1.1.11"/>
    </reaction>
</comment>
<comment type="pathway">
    <text>Aminoacyl-tRNA biosynthesis; selenocysteinyl-tRNA(Sec) biosynthesis; L-seryl-tRNA(Sec) from L-serine and tRNA(Sec): step 1/1.</text>
</comment>
<comment type="subunit">
    <text evidence="1">Homodimer. The tRNA molecule may bind across the dimer. Interacts with SIRT2. Interacts with METTL6; interaction is required for the tRNA N(3)-methylcytidine methyltransferase activity of METTL6.</text>
</comment>
<comment type="subcellular location">
    <subcellularLocation>
        <location evidence="1">Cytoplasm</location>
    </subcellularLocation>
    <subcellularLocation>
        <location evidence="1">Nucleus</location>
    </subcellularLocation>
    <text evidence="1">Predominantly cytoplasmic, but a minor proportion is also found in the nucleus.</text>
</comment>
<comment type="domain">
    <text evidence="1">Consists of two distinct domains, a catalytic core and a N-terminal extension that is involved in tRNA binding.</text>
</comment>
<comment type="similarity">
    <text evidence="3">Belongs to the class-II aminoacyl-tRNA synthetase family. Type-1 seryl-tRNA synthetase subfamily.</text>
</comment>
<feature type="chain" id="PRO_0000270765" description="Serine--tRNA ligase, cytoplasmic">
    <location>
        <begin position="1"/>
        <end position="512"/>
    </location>
</feature>
<feature type="region of interest" description="Interaction with tRNA" evidence="1">
    <location>
        <begin position="9"/>
        <end position="61"/>
    </location>
</feature>
<feature type="region of interest" description="Disordered" evidence="2">
    <location>
        <begin position="472"/>
        <end position="512"/>
    </location>
</feature>
<feature type="short sequence motif" description="Nuclear localization signal" evidence="1">
    <location>
        <begin position="482"/>
        <end position="494"/>
    </location>
</feature>
<feature type="compositionally biased region" description="Basic and acidic residues" evidence="2">
    <location>
        <begin position="479"/>
        <end position="499"/>
    </location>
</feature>
<feature type="compositionally biased region" description="Polar residues" evidence="2">
    <location>
        <begin position="500"/>
        <end position="512"/>
    </location>
</feature>
<feature type="binding site" evidence="1">
    <location>
        <position position="271"/>
    </location>
    <ligand>
        <name>L-serine</name>
        <dbReference type="ChEBI" id="CHEBI:33384"/>
    </ligand>
</feature>
<feature type="binding site" evidence="1">
    <location>
        <begin position="302"/>
        <end position="304"/>
    </location>
    <ligand>
        <name>ATP</name>
        <dbReference type="ChEBI" id="CHEBI:30616"/>
    </ligand>
</feature>
<feature type="binding site" evidence="1">
    <location>
        <position position="302"/>
    </location>
    <ligand>
        <name>L-serine</name>
        <dbReference type="ChEBI" id="CHEBI:33384"/>
    </ligand>
</feature>
<feature type="binding site" evidence="1">
    <location>
        <begin position="318"/>
        <end position="321"/>
    </location>
    <ligand>
        <name>ATP</name>
        <dbReference type="ChEBI" id="CHEBI:30616"/>
    </ligand>
</feature>
<feature type="binding site" evidence="1">
    <location>
        <position position="325"/>
    </location>
    <ligand>
        <name>L-serine</name>
        <dbReference type="ChEBI" id="CHEBI:33384"/>
    </ligand>
</feature>
<feature type="binding site" evidence="1">
    <location>
        <begin position="391"/>
        <end position="394"/>
    </location>
    <ligand>
        <name>ATP</name>
        <dbReference type="ChEBI" id="CHEBI:30616"/>
    </ligand>
</feature>
<feature type="binding site" evidence="1">
    <location>
        <position position="427"/>
    </location>
    <ligand>
        <name>L-serine</name>
        <dbReference type="ChEBI" id="CHEBI:33384"/>
    </ligand>
</feature>
<feature type="site" description="Important for serine binding" evidence="1">
    <location>
        <position position="429"/>
    </location>
</feature>
<feature type="modified residue" description="N-acetylmethionine" evidence="1">
    <location>
        <position position="1"/>
    </location>
</feature>
<feature type="modified residue" description="Phosphoserine" evidence="1">
    <location>
        <position position="241"/>
    </location>
</feature>
<feature type="modified residue" description="N6-acetyllysine" evidence="1">
    <location>
        <position position="323"/>
    </location>
</feature>